<dbReference type="EC" id="1.12.99.6"/>
<dbReference type="EMBL" id="D28594">
    <property type="protein sequence ID" value="BAA05929.1"/>
    <property type="molecule type" value="Genomic_DNA"/>
</dbReference>
<dbReference type="SMR" id="Q46045"/>
<dbReference type="STRING" id="1333848.CFNIH1_11600"/>
<dbReference type="GO" id="GO:0044569">
    <property type="term" value="C:[Ni-Fe] hydrogenase complex"/>
    <property type="evidence" value="ECO:0007669"/>
    <property type="project" value="TreeGrafter"/>
</dbReference>
<dbReference type="GO" id="GO:0009375">
    <property type="term" value="C:ferredoxin hydrogenase complex"/>
    <property type="evidence" value="ECO:0007669"/>
    <property type="project" value="InterPro"/>
</dbReference>
<dbReference type="GO" id="GO:0005886">
    <property type="term" value="C:plasma membrane"/>
    <property type="evidence" value="ECO:0007669"/>
    <property type="project" value="UniProtKB-SubCell"/>
</dbReference>
<dbReference type="GO" id="GO:0051538">
    <property type="term" value="F:3 iron, 4 sulfur cluster binding"/>
    <property type="evidence" value="ECO:0007669"/>
    <property type="project" value="UniProtKB-KW"/>
</dbReference>
<dbReference type="GO" id="GO:0051539">
    <property type="term" value="F:4 iron, 4 sulfur cluster binding"/>
    <property type="evidence" value="ECO:0007669"/>
    <property type="project" value="UniProtKB-KW"/>
</dbReference>
<dbReference type="GO" id="GO:0009055">
    <property type="term" value="F:electron transfer activity"/>
    <property type="evidence" value="ECO:0007669"/>
    <property type="project" value="TreeGrafter"/>
</dbReference>
<dbReference type="GO" id="GO:0008901">
    <property type="term" value="F:ferredoxin hydrogenase activity"/>
    <property type="evidence" value="ECO:0007669"/>
    <property type="project" value="InterPro"/>
</dbReference>
<dbReference type="GO" id="GO:0033748">
    <property type="term" value="F:hydrogenase (acceptor) activity"/>
    <property type="evidence" value="ECO:0007669"/>
    <property type="project" value="UniProtKB-EC"/>
</dbReference>
<dbReference type="GO" id="GO:0046872">
    <property type="term" value="F:metal ion binding"/>
    <property type="evidence" value="ECO:0007669"/>
    <property type="project" value="UniProtKB-KW"/>
</dbReference>
<dbReference type="GO" id="GO:0009061">
    <property type="term" value="P:anaerobic respiration"/>
    <property type="evidence" value="ECO:0007669"/>
    <property type="project" value="TreeGrafter"/>
</dbReference>
<dbReference type="FunFam" id="3.40.50.700:FF:000002">
    <property type="entry name" value="Hydrogenase-1 small chain"/>
    <property type="match status" value="1"/>
</dbReference>
<dbReference type="FunFam" id="4.10.480.10:FF:000002">
    <property type="entry name" value="Hydrogenase-1 small chain"/>
    <property type="match status" value="1"/>
</dbReference>
<dbReference type="Gene3D" id="4.10.480.10">
    <property type="entry name" value="Cytochrome-c3 hydrogenase, C-terminal domain"/>
    <property type="match status" value="1"/>
</dbReference>
<dbReference type="Gene3D" id="3.40.50.700">
    <property type="entry name" value="NADH:ubiquinone oxidoreductase-like, 20kDa subunit"/>
    <property type="match status" value="1"/>
</dbReference>
<dbReference type="InterPro" id="IPR027394">
    <property type="entry name" value="Cytochrome-c3_hydrogenase_C"/>
</dbReference>
<dbReference type="InterPro" id="IPR006137">
    <property type="entry name" value="NADH_UbQ_OxRdtase-like_20kDa"/>
</dbReference>
<dbReference type="InterPro" id="IPR037148">
    <property type="entry name" value="NiFe-Hase_small_C_sf"/>
</dbReference>
<dbReference type="InterPro" id="IPR037024">
    <property type="entry name" value="NiFe_Hase_small_N_sf"/>
</dbReference>
<dbReference type="InterPro" id="IPR001821">
    <property type="entry name" value="NiFe_hydrogenase_ssu"/>
</dbReference>
<dbReference type="InterPro" id="IPR006311">
    <property type="entry name" value="TAT_signal"/>
</dbReference>
<dbReference type="InterPro" id="IPR019546">
    <property type="entry name" value="TAT_signal_bac_arc"/>
</dbReference>
<dbReference type="NCBIfam" id="TIGR00391">
    <property type="entry name" value="hydA"/>
    <property type="match status" value="1"/>
</dbReference>
<dbReference type="NCBIfam" id="TIGR01409">
    <property type="entry name" value="TAT_signal_seq"/>
    <property type="match status" value="1"/>
</dbReference>
<dbReference type="PANTHER" id="PTHR30013:SF6">
    <property type="entry name" value="HYDROGENASE-1 SMALL CHAIN"/>
    <property type="match status" value="1"/>
</dbReference>
<dbReference type="PANTHER" id="PTHR30013">
    <property type="entry name" value="NIFE / NIFESE HYDROGENASE SMALL SUBUNIT FAMILY MEMBER"/>
    <property type="match status" value="1"/>
</dbReference>
<dbReference type="Pfam" id="PF14720">
    <property type="entry name" value="NiFe_hyd_SSU_C"/>
    <property type="match status" value="1"/>
</dbReference>
<dbReference type="Pfam" id="PF01058">
    <property type="entry name" value="Oxidored_q6"/>
    <property type="match status" value="1"/>
</dbReference>
<dbReference type="PIRSF" id="PIRSF000310">
    <property type="entry name" value="NiFe_hyd_ssu"/>
    <property type="match status" value="1"/>
</dbReference>
<dbReference type="PRINTS" id="PR00614">
    <property type="entry name" value="NIHGNASESMLL"/>
</dbReference>
<dbReference type="SUPFAM" id="SSF56770">
    <property type="entry name" value="HydA/Nqo6-like"/>
    <property type="match status" value="1"/>
</dbReference>
<dbReference type="PROSITE" id="PS51318">
    <property type="entry name" value="TAT"/>
    <property type="match status" value="1"/>
</dbReference>
<gene>
    <name type="primary">hyaA</name>
</gene>
<reference key="1">
    <citation type="submission" date="1994-03" db="EMBL/GenBank/DDBJ databases">
        <authorList>
            <person name="Yano K."/>
            <person name="Ikebukuro K."/>
            <person name="Tomiyama M."/>
            <person name="Karube I."/>
        </authorList>
    </citation>
    <scope>NUCLEOTIDE SEQUENCE [GENOMIC DNA]</scope>
</reference>
<comment type="catalytic activity">
    <reaction>
        <text>H2 + A = AH2</text>
        <dbReference type="Rhea" id="RHEA:12116"/>
        <dbReference type="ChEBI" id="CHEBI:13193"/>
        <dbReference type="ChEBI" id="CHEBI:17499"/>
        <dbReference type="ChEBI" id="CHEBI:18276"/>
        <dbReference type="EC" id="1.12.99.6"/>
    </reaction>
</comment>
<comment type="cofactor">
    <cofactor evidence="1">
        <name>[4Fe-4S] cluster</name>
        <dbReference type="ChEBI" id="CHEBI:49883"/>
    </cofactor>
    <text evidence="1">Binds 2 [4Fe-4S] clusters.</text>
</comment>
<comment type="cofactor">
    <cofactor evidence="1">
        <name>[3Fe-4S] cluster</name>
        <dbReference type="ChEBI" id="CHEBI:21137"/>
    </cofactor>
    <text evidence="1">Binds 1 [3Fe-4S] cluster.</text>
</comment>
<comment type="subunit">
    <text>Heterodimer of a large and a small subunit.</text>
</comment>
<comment type="subcellular location">
    <subcellularLocation>
        <location>Cell membrane</location>
        <topology>Peripheral membrane protein</topology>
        <orientation>Periplasmic side</orientation>
    </subcellularLocation>
</comment>
<comment type="PTM">
    <text>Predicted to be exported by the Tat system. The position of the signal peptide cleavage has not been experimentally proven.</text>
</comment>
<comment type="similarity">
    <text evidence="4">Belongs to the [NiFe]/[NiFeSe] hydrogenase small subunit family.</text>
</comment>
<keyword id="KW-0003">3Fe-4S</keyword>
<keyword id="KW-0004">4Fe-4S</keyword>
<keyword id="KW-1003">Cell membrane</keyword>
<keyword id="KW-0408">Iron</keyword>
<keyword id="KW-0411">Iron-sulfur</keyword>
<keyword id="KW-0472">Membrane</keyword>
<keyword id="KW-0479">Metal-binding</keyword>
<keyword id="KW-0560">Oxidoreductase</keyword>
<keyword id="KW-0732">Signal</keyword>
<organism>
    <name type="scientific">Citrobacter freundii</name>
    <dbReference type="NCBI Taxonomy" id="546"/>
    <lineage>
        <taxon>Bacteria</taxon>
        <taxon>Pseudomonadati</taxon>
        <taxon>Pseudomonadota</taxon>
        <taxon>Gammaproteobacteria</taxon>
        <taxon>Enterobacterales</taxon>
        <taxon>Enterobacteriaceae</taxon>
        <taxon>Citrobacter</taxon>
        <taxon>Citrobacter freundii complex</taxon>
    </lineage>
</organism>
<proteinExistence type="inferred from homology"/>
<accession>Q46045</accession>
<sequence>MNTNNEETFYQAMRRKGVSRRSFLKYCSLAATSLGLGAAMTPRIAWALENKPRIPVVWIHGLECTCCTESFIRSSHPLAKDVILSLISLDYDDTLMAAAGTQAEEVFEDILSRYHGRYILAVEGNPPLGEQGMFCISGGRPFIEKAKRAAAGASAIIAWGTCASWGCVQAARPNPTQATPIDKVITDKPIVKVPGCPPIPDVMSAIITYMVTFDRLPELDRLGRPLMFYGQRIHDKCYRRAHFDAGEFVESWDDDAARKGYCLYKMGCKGPTTYNACSTTRWNGGVSFPIQSGHGCLGCSENGFWDRGSFYSRVVDIPQMGTHSTADTVGLTALGVVASSVGVHAVASAVNQHNRHKQQLADAGQQSPDNEDKQA</sequence>
<name>MBHS_CITFR</name>
<feature type="signal peptide" description="Tat-type signal" evidence="2">
    <location>
        <begin position="1"/>
        <end position="47"/>
    </location>
</feature>
<feature type="chain" id="PRO_0000013426" description="Hydrogenase-1 small chain">
    <location>
        <begin position="48"/>
        <end position="375"/>
    </location>
</feature>
<feature type="region of interest" description="Disordered" evidence="3">
    <location>
        <begin position="353"/>
        <end position="375"/>
    </location>
</feature>
<feature type="binding site" evidence="1">
    <location>
        <position position="64"/>
    </location>
    <ligand>
        <name>[4Fe-4S] cluster</name>
        <dbReference type="ChEBI" id="CHEBI:49883"/>
        <label>1</label>
    </ligand>
</feature>
<feature type="binding site" evidence="1">
    <location>
        <position position="67"/>
    </location>
    <ligand>
        <name>[4Fe-4S] cluster</name>
        <dbReference type="ChEBI" id="CHEBI:49883"/>
        <label>1</label>
    </ligand>
</feature>
<feature type="binding site" evidence="1">
    <location>
        <position position="162"/>
    </location>
    <ligand>
        <name>[4Fe-4S] cluster</name>
        <dbReference type="ChEBI" id="CHEBI:49883"/>
        <label>1</label>
    </ligand>
</feature>
<feature type="binding site" evidence="1">
    <location>
        <position position="196"/>
    </location>
    <ligand>
        <name>[4Fe-4S] cluster</name>
        <dbReference type="ChEBI" id="CHEBI:49883"/>
        <label>1</label>
    </ligand>
</feature>
<feature type="binding site" evidence="1">
    <location>
        <position position="234"/>
    </location>
    <ligand>
        <name>[4Fe-4S] cluster</name>
        <dbReference type="ChEBI" id="CHEBI:49883"/>
        <label>2</label>
    </ligand>
</feature>
<feature type="binding site" evidence="1">
    <location>
        <position position="237"/>
    </location>
    <ligand>
        <name>[4Fe-4S] cluster</name>
        <dbReference type="ChEBI" id="CHEBI:49883"/>
        <label>2</label>
    </ligand>
</feature>
<feature type="binding site" evidence="1">
    <location>
        <position position="262"/>
    </location>
    <ligand>
        <name>[4Fe-4S] cluster</name>
        <dbReference type="ChEBI" id="CHEBI:49883"/>
        <label>2</label>
    </ligand>
</feature>
<feature type="binding site" evidence="1">
    <location>
        <position position="268"/>
    </location>
    <ligand>
        <name>[4Fe-4S] cluster</name>
        <dbReference type="ChEBI" id="CHEBI:49883"/>
        <label>2</label>
    </ligand>
</feature>
<feature type="binding site" evidence="1">
    <location>
        <position position="277"/>
    </location>
    <ligand>
        <name>[3Fe-4S] cluster</name>
        <dbReference type="ChEBI" id="CHEBI:21137"/>
    </ligand>
</feature>
<feature type="binding site" evidence="1">
    <location>
        <position position="296"/>
    </location>
    <ligand>
        <name>[3Fe-4S] cluster</name>
        <dbReference type="ChEBI" id="CHEBI:21137"/>
    </ligand>
</feature>
<feature type="binding site" evidence="1">
    <location>
        <position position="299"/>
    </location>
    <ligand>
        <name>[3Fe-4S] cluster</name>
        <dbReference type="ChEBI" id="CHEBI:21137"/>
    </ligand>
</feature>
<protein>
    <recommendedName>
        <fullName>Hydrogenase-1 small chain</fullName>
        <shortName>HYD1</shortName>
        <ecNumber>1.12.99.6</ecNumber>
    </recommendedName>
    <alternativeName>
        <fullName>Membrane-bound hydrogenase 1 small subunit</fullName>
    </alternativeName>
    <alternativeName>
        <fullName>NiFe hydrogenase</fullName>
    </alternativeName>
</protein>
<evidence type="ECO:0000250" key="1">
    <source>
        <dbReference type="UniProtKB" id="P21853"/>
    </source>
</evidence>
<evidence type="ECO:0000255" key="2">
    <source>
        <dbReference type="PROSITE-ProRule" id="PRU00648"/>
    </source>
</evidence>
<evidence type="ECO:0000256" key="3">
    <source>
        <dbReference type="SAM" id="MobiDB-lite"/>
    </source>
</evidence>
<evidence type="ECO:0000305" key="4"/>